<organism>
    <name type="scientific">Arabidopsis thaliana</name>
    <name type="common">Mouse-ear cress</name>
    <dbReference type="NCBI Taxonomy" id="3702"/>
    <lineage>
        <taxon>Eukaryota</taxon>
        <taxon>Viridiplantae</taxon>
        <taxon>Streptophyta</taxon>
        <taxon>Embryophyta</taxon>
        <taxon>Tracheophyta</taxon>
        <taxon>Spermatophyta</taxon>
        <taxon>Magnoliopsida</taxon>
        <taxon>eudicotyledons</taxon>
        <taxon>Gunneridae</taxon>
        <taxon>Pentapetalae</taxon>
        <taxon>rosids</taxon>
        <taxon>malvids</taxon>
        <taxon>Brassicales</taxon>
        <taxon>Brassicaceae</taxon>
        <taxon>Camelineae</taxon>
        <taxon>Arabidopsis</taxon>
    </lineage>
</organism>
<reference key="1">
    <citation type="journal article" date="2000" name="Nature">
        <title>Sequence and analysis of chromosome 5 of the plant Arabidopsis thaliana.</title>
        <authorList>
            <person name="Tabata S."/>
            <person name="Kaneko T."/>
            <person name="Nakamura Y."/>
            <person name="Kotani H."/>
            <person name="Kato T."/>
            <person name="Asamizu E."/>
            <person name="Miyajima N."/>
            <person name="Sasamoto S."/>
            <person name="Kimura T."/>
            <person name="Hosouchi T."/>
            <person name="Kawashima K."/>
            <person name="Kohara M."/>
            <person name="Matsumoto M."/>
            <person name="Matsuno A."/>
            <person name="Muraki A."/>
            <person name="Nakayama S."/>
            <person name="Nakazaki N."/>
            <person name="Naruo K."/>
            <person name="Okumura S."/>
            <person name="Shinpo S."/>
            <person name="Takeuchi C."/>
            <person name="Wada T."/>
            <person name="Watanabe A."/>
            <person name="Yamada M."/>
            <person name="Yasuda M."/>
            <person name="Sato S."/>
            <person name="de la Bastide M."/>
            <person name="Huang E."/>
            <person name="Spiegel L."/>
            <person name="Gnoj L."/>
            <person name="O'Shaughnessy A."/>
            <person name="Preston R."/>
            <person name="Habermann K."/>
            <person name="Murray J."/>
            <person name="Johnson D."/>
            <person name="Rohlfing T."/>
            <person name="Nelson J."/>
            <person name="Stoneking T."/>
            <person name="Pepin K."/>
            <person name="Spieth J."/>
            <person name="Sekhon M."/>
            <person name="Armstrong J."/>
            <person name="Becker M."/>
            <person name="Belter E."/>
            <person name="Cordum H."/>
            <person name="Cordes M."/>
            <person name="Courtney L."/>
            <person name="Courtney W."/>
            <person name="Dante M."/>
            <person name="Du H."/>
            <person name="Edwards J."/>
            <person name="Fryman J."/>
            <person name="Haakensen B."/>
            <person name="Lamar E."/>
            <person name="Latreille P."/>
            <person name="Leonard S."/>
            <person name="Meyer R."/>
            <person name="Mulvaney E."/>
            <person name="Ozersky P."/>
            <person name="Riley A."/>
            <person name="Strowmatt C."/>
            <person name="Wagner-McPherson C."/>
            <person name="Wollam A."/>
            <person name="Yoakum M."/>
            <person name="Bell M."/>
            <person name="Dedhia N."/>
            <person name="Parnell L."/>
            <person name="Shah R."/>
            <person name="Rodriguez M."/>
            <person name="Hoon See L."/>
            <person name="Vil D."/>
            <person name="Baker J."/>
            <person name="Kirchoff K."/>
            <person name="Toth K."/>
            <person name="King L."/>
            <person name="Bahret A."/>
            <person name="Miller B."/>
            <person name="Marra M.A."/>
            <person name="Martienssen R."/>
            <person name="McCombie W.R."/>
            <person name="Wilson R.K."/>
            <person name="Murphy G."/>
            <person name="Bancroft I."/>
            <person name="Volckaert G."/>
            <person name="Wambutt R."/>
            <person name="Duesterhoeft A."/>
            <person name="Stiekema W."/>
            <person name="Pohl T."/>
            <person name="Entian K.-D."/>
            <person name="Terryn N."/>
            <person name="Hartley N."/>
            <person name="Bent E."/>
            <person name="Johnson S."/>
            <person name="Langham S.-A."/>
            <person name="McCullagh B."/>
            <person name="Robben J."/>
            <person name="Grymonprez B."/>
            <person name="Zimmermann W."/>
            <person name="Ramsperger U."/>
            <person name="Wedler H."/>
            <person name="Balke K."/>
            <person name="Wedler E."/>
            <person name="Peters S."/>
            <person name="van Staveren M."/>
            <person name="Dirkse W."/>
            <person name="Mooijman P."/>
            <person name="Klein Lankhorst R."/>
            <person name="Weitzenegger T."/>
            <person name="Bothe G."/>
            <person name="Rose M."/>
            <person name="Hauf J."/>
            <person name="Berneiser S."/>
            <person name="Hempel S."/>
            <person name="Feldpausch M."/>
            <person name="Lamberth S."/>
            <person name="Villarroel R."/>
            <person name="Gielen J."/>
            <person name="Ardiles W."/>
            <person name="Bents O."/>
            <person name="Lemcke K."/>
            <person name="Kolesov G."/>
            <person name="Mayer K.F.X."/>
            <person name="Rudd S."/>
            <person name="Schoof H."/>
            <person name="Schueller C."/>
            <person name="Zaccaria P."/>
            <person name="Mewes H.-W."/>
            <person name="Bevan M."/>
            <person name="Fransz P.F."/>
        </authorList>
    </citation>
    <scope>NUCLEOTIDE SEQUENCE [LARGE SCALE GENOMIC DNA]</scope>
    <source>
        <strain>cv. Columbia</strain>
    </source>
</reference>
<reference key="2">
    <citation type="journal article" date="2017" name="Plant J.">
        <title>Araport11: a complete reannotation of the Arabidopsis thaliana reference genome.</title>
        <authorList>
            <person name="Cheng C.Y."/>
            <person name="Krishnakumar V."/>
            <person name="Chan A.P."/>
            <person name="Thibaud-Nissen F."/>
            <person name="Schobel S."/>
            <person name="Town C.D."/>
        </authorList>
    </citation>
    <scope>GENOME REANNOTATION</scope>
    <source>
        <strain>cv. Columbia</strain>
    </source>
</reference>
<reference key="3">
    <citation type="journal article" date="2003" name="Science">
        <title>Empirical analysis of transcriptional activity in the Arabidopsis genome.</title>
        <authorList>
            <person name="Yamada K."/>
            <person name="Lim J."/>
            <person name="Dale J.M."/>
            <person name="Chen H."/>
            <person name="Shinn P."/>
            <person name="Palm C.J."/>
            <person name="Southwick A.M."/>
            <person name="Wu H.C."/>
            <person name="Kim C.J."/>
            <person name="Nguyen M."/>
            <person name="Pham P.K."/>
            <person name="Cheuk R.F."/>
            <person name="Karlin-Newmann G."/>
            <person name="Liu S.X."/>
            <person name="Lam B."/>
            <person name="Sakano H."/>
            <person name="Wu T."/>
            <person name="Yu G."/>
            <person name="Miranda M."/>
            <person name="Quach H.L."/>
            <person name="Tripp M."/>
            <person name="Chang C.H."/>
            <person name="Lee J.M."/>
            <person name="Toriumi M.J."/>
            <person name="Chan M.M."/>
            <person name="Tang C.C."/>
            <person name="Onodera C.S."/>
            <person name="Deng J.M."/>
            <person name="Akiyama K."/>
            <person name="Ansari Y."/>
            <person name="Arakawa T."/>
            <person name="Banh J."/>
            <person name="Banno F."/>
            <person name="Bowser L."/>
            <person name="Brooks S.Y."/>
            <person name="Carninci P."/>
            <person name="Chao Q."/>
            <person name="Choy N."/>
            <person name="Enju A."/>
            <person name="Goldsmith A.D."/>
            <person name="Gurjal M."/>
            <person name="Hansen N.F."/>
            <person name="Hayashizaki Y."/>
            <person name="Johnson-Hopson C."/>
            <person name="Hsuan V.W."/>
            <person name="Iida K."/>
            <person name="Karnes M."/>
            <person name="Khan S."/>
            <person name="Koesema E."/>
            <person name="Ishida J."/>
            <person name="Jiang P.X."/>
            <person name="Jones T."/>
            <person name="Kawai J."/>
            <person name="Kamiya A."/>
            <person name="Meyers C."/>
            <person name="Nakajima M."/>
            <person name="Narusaka M."/>
            <person name="Seki M."/>
            <person name="Sakurai T."/>
            <person name="Satou M."/>
            <person name="Tamse R."/>
            <person name="Vaysberg M."/>
            <person name="Wallender E.K."/>
            <person name="Wong C."/>
            <person name="Yamamura Y."/>
            <person name="Yuan S."/>
            <person name="Shinozaki K."/>
            <person name="Davis R.W."/>
            <person name="Theologis A."/>
            <person name="Ecker J.R."/>
        </authorList>
    </citation>
    <scope>NUCLEOTIDE SEQUENCE [LARGE SCALE MRNA]</scope>
    <source>
        <strain>cv. Columbia</strain>
    </source>
</reference>
<reference key="4">
    <citation type="journal article" date="2009" name="DNA Res.">
        <title>Analysis of multiple occurrences of alternative splicing events in Arabidopsis thaliana using novel sequenced full-length cDNAs.</title>
        <authorList>
            <person name="Iida K."/>
            <person name="Fukami-Kobayashi K."/>
            <person name="Toyoda A."/>
            <person name="Sakaki Y."/>
            <person name="Kobayashi M."/>
            <person name="Seki M."/>
            <person name="Shinozaki K."/>
        </authorList>
    </citation>
    <scope>NUCLEOTIDE SEQUENCE [LARGE SCALE MRNA]</scope>
    <source>
        <strain>cv. Columbia</strain>
    </source>
</reference>
<reference key="5">
    <citation type="journal article" date="2007" name="Mol. Cell">
        <title>Purification of a plant mediator from Arabidopsis thaliana identifies PFT1 as the Med25 subunit.</title>
        <authorList>
            <person name="Baeckstroem S."/>
            <person name="Elfving N."/>
            <person name="Nilsson R."/>
            <person name="Wingsle G."/>
            <person name="Bjoerklund S."/>
        </authorList>
    </citation>
    <scope>IDENTIFICATION BY MASS SPECTROMETRY</scope>
    <scope>SUBUNIT</scope>
    <scope>NOMENCLATURE</scope>
</reference>
<reference key="6">
    <citation type="journal article" date="2011" name="Plant Physiol.">
        <title>The Mediator complex in plants: structure, phylogeny, and expression profiling of representative genes in a dicot (Arabidopsis) and a monocot (rice) during reproduction and abiotic stress.</title>
        <authorList>
            <person name="Mathur S."/>
            <person name="Vyas S."/>
            <person name="Kapoor S."/>
            <person name="Tyagi A.K."/>
        </authorList>
    </citation>
    <scope>IDENTIFICATION</scope>
    <scope>SUBUNIT</scope>
    <scope>NOMENCLATURE</scope>
</reference>
<reference key="7">
    <citation type="journal article" date="2015" name="Plant Cell">
        <title>Arabidopsis CBP1 is a novel regulator of transcription initiation in central cell-mediated pollen tube guidance.</title>
        <authorList>
            <person name="Li H.J."/>
            <person name="Zhu S.S."/>
            <person name="Zhang M.X."/>
            <person name="Wang T."/>
            <person name="Liang L."/>
            <person name="Xue Y."/>
            <person name="Shi D.Q."/>
            <person name="Liu J."/>
            <person name="Yang W.C."/>
        </authorList>
    </citation>
    <scope>INTERACTION WITH ME14/CBP1</scope>
</reference>
<name>MED7B_ARATH</name>
<keyword id="KW-0175">Coiled coil</keyword>
<keyword id="KW-0539">Nucleus</keyword>
<keyword id="KW-1185">Reference proteome</keyword>
<keyword id="KW-0804">Transcription</keyword>
<keyword id="KW-0805">Transcription regulation</keyword>
<accession>Q9LZD7</accession>
<comment type="function">
    <text>Component of the Mediator complex, a coactivator involved in the regulated transcription of nearly all RNA polymerase II-dependent genes. Mediator functions as a bridge to convey information from gene-specific regulatory proteins to the basal RNA polymerase II transcription machinery. The Mediator complex, having a compact conformation in its free form, is recruited to promoters by direct interactions with regulatory proteins and serves for the assembly of a functional pre-initiation complex with RNA polymerase II and the general transcription factors.</text>
</comment>
<comment type="subunit">
    <text evidence="3 4 5">Component of the Mediator complex (PubMed:17560376, PubMed:22021418). Interacts with MEE14/CBP1 (PubMed:26462908).</text>
</comment>
<comment type="subcellular location">
    <subcellularLocation>
        <location evidence="6">Nucleus</location>
    </subcellularLocation>
</comment>
<comment type="similarity">
    <text evidence="6">Belongs to the Mediator complex subunit 7 family.</text>
</comment>
<protein>
    <recommendedName>
        <fullName>Mediator of RNA polymerase II transcription subunit 7b</fullName>
    </recommendedName>
</protein>
<dbReference type="EMBL" id="AL162751">
    <property type="protein sequence ID" value="CAB83310.1"/>
    <property type="molecule type" value="Genomic_DNA"/>
</dbReference>
<dbReference type="EMBL" id="CP002688">
    <property type="protein sequence ID" value="AED90613.1"/>
    <property type="molecule type" value="Genomic_DNA"/>
</dbReference>
<dbReference type="EMBL" id="CP002688">
    <property type="protein sequence ID" value="AED90614.1"/>
    <property type="molecule type" value="Genomic_DNA"/>
</dbReference>
<dbReference type="EMBL" id="CP002688">
    <property type="protein sequence ID" value="AED90615.1"/>
    <property type="molecule type" value="Genomic_DNA"/>
</dbReference>
<dbReference type="EMBL" id="CP002688">
    <property type="protein sequence ID" value="ANM69262.1"/>
    <property type="molecule type" value="Genomic_DNA"/>
</dbReference>
<dbReference type="EMBL" id="CP002688">
    <property type="protein sequence ID" value="ANM69263.1"/>
    <property type="molecule type" value="Genomic_DNA"/>
</dbReference>
<dbReference type="EMBL" id="CP002688">
    <property type="protein sequence ID" value="ANM69265.1"/>
    <property type="molecule type" value="Genomic_DNA"/>
</dbReference>
<dbReference type="EMBL" id="AY075596">
    <property type="protein sequence ID" value="AAL91616.1"/>
    <property type="molecule type" value="mRNA"/>
</dbReference>
<dbReference type="EMBL" id="AY097400">
    <property type="protein sequence ID" value="AAM19916.1"/>
    <property type="molecule type" value="mRNA"/>
</dbReference>
<dbReference type="EMBL" id="AK317313">
    <property type="protein sequence ID" value="BAH19989.1"/>
    <property type="molecule type" value="mRNA"/>
</dbReference>
<dbReference type="PIR" id="T48375">
    <property type="entry name" value="T48375"/>
</dbReference>
<dbReference type="RefSeq" id="NP_001078525.1">
    <property type="nucleotide sequence ID" value="NM_001085056.2"/>
</dbReference>
<dbReference type="RefSeq" id="NP_001190215.1">
    <property type="nucleotide sequence ID" value="NM_001203286.1"/>
</dbReference>
<dbReference type="RefSeq" id="NP_001330956.1">
    <property type="nucleotide sequence ID" value="NM_001342707.1"/>
</dbReference>
<dbReference type="RefSeq" id="NP_001330957.1">
    <property type="nucleotide sequence ID" value="NM_001342708.1"/>
</dbReference>
<dbReference type="RefSeq" id="NP_001330959.1">
    <property type="nucleotide sequence ID" value="NM_001342710.1"/>
</dbReference>
<dbReference type="RefSeq" id="NP_195970.2">
    <property type="nucleotide sequence ID" value="NM_120430.3"/>
</dbReference>
<dbReference type="SMR" id="Q9LZD7"/>
<dbReference type="BioGRID" id="17098">
    <property type="interactions" value="10"/>
</dbReference>
<dbReference type="FunCoup" id="Q9LZD7">
    <property type="interactions" value="4015"/>
</dbReference>
<dbReference type="IntAct" id="Q9LZD7">
    <property type="interactions" value="11"/>
</dbReference>
<dbReference type="STRING" id="3702.Q9LZD7"/>
<dbReference type="PaxDb" id="3702-AT5G03500.3"/>
<dbReference type="EnsemblPlants" id="AT5G03500.1">
    <property type="protein sequence ID" value="AT5G03500.1"/>
    <property type="gene ID" value="AT5G03500"/>
</dbReference>
<dbReference type="EnsemblPlants" id="AT5G03500.2">
    <property type="protein sequence ID" value="AT5G03500.2"/>
    <property type="gene ID" value="AT5G03500"/>
</dbReference>
<dbReference type="EnsemblPlants" id="AT5G03500.3">
    <property type="protein sequence ID" value="AT5G03500.3"/>
    <property type="gene ID" value="AT5G03500"/>
</dbReference>
<dbReference type="EnsemblPlants" id="AT5G03500.4">
    <property type="protein sequence ID" value="AT5G03500.4"/>
    <property type="gene ID" value="AT5G03500"/>
</dbReference>
<dbReference type="EnsemblPlants" id="AT5G03500.5">
    <property type="protein sequence ID" value="AT5G03500.5"/>
    <property type="gene ID" value="AT5G03500"/>
</dbReference>
<dbReference type="EnsemblPlants" id="AT5G03500.7">
    <property type="protein sequence ID" value="AT5G03500.7"/>
    <property type="gene ID" value="AT5G03500"/>
</dbReference>
<dbReference type="GeneID" id="831822"/>
<dbReference type="Gramene" id="AT5G03500.1">
    <property type="protein sequence ID" value="AT5G03500.1"/>
    <property type="gene ID" value="AT5G03500"/>
</dbReference>
<dbReference type="Gramene" id="AT5G03500.2">
    <property type="protein sequence ID" value="AT5G03500.2"/>
    <property type="gene ID" value="AT5G03500"/>
</dbReference>
<dbReference type="Gramene" id="AT5G03500.3">
    <property type="protein sequence ID" value="AT5G03500.3"/>
    <property type="gene ID" value="AT5G03500"/>
</dbReference>
<dbReference type="Gramene" id="AT5G03500.4">
    <property type="protein sequence ID" value="AT5G03500.4"/>
    <property type="gene ID" value="AT5G03500"/>
</dbReference>
<dbReference type="Gramene" id="AT5G03500.5">
    <property type="protein sequence ID" value="AT5G03500.5"/>
    <property type="gene ID" value="AT5G03500"/>
</dbReference>
<dbReference type="Gramene" id="AT5G03500.7">
    <property type="protein sequence ID" value="AT5G03500.7"/>
    <property type="gene ID" value="AT5G03500"/>
</dbReference>
<dbReference type="KEGG" id="ath:AT5G03500"/>
<dbReference type="Araport" id="AT5G03500"/>
<dbReference type="TAIR" id="AT5G03500">
    <property type="gene designation" value="MED7B"/>
</dbReference>
<dbReference type="eggNOG" id="KOG0570">
    <property type="taxonomic scope" value="Eukaryota"/>
</dbReference>
<dbReference type="HOGENOM" id="CLU_065214_4_0_1"/>
<dbReference type="InParanoid" id="Q9LZD7"/>
<dbReference type="OMA" id="HTIFINM"/>
<dbReference type="OrthoDB" id="10253553at2759"/>
<dbReference type="PhylomeDB" id="Q9LZD7"/>
<dbReference type="PRO" id="PR:Q9LZD7"/>
<dbReference type="Proteomes" id="UP000006548">
    <property type="component" value="Chromosome 5"/>
</dbReference>
<dbReference type="ExpressionAtlas" id="Q9LZD7">
    <property type="expression patterns" value="baseline and differential"/>
</dbReference>
<dbReference type="GO" id="GO:0016592">
    <property type="term" value="C:mediator complex"/>
    <property type="evidence" value="ECO:0000314"/>
    <property type="project" value="UniProtKB"/>
</dbReference>
<dbReference type="GO" id="GO:0003712">
    <property type="term" value="F:transcription coregulator activity"/>
    <property type="evidence" value="ECO:0007669"/>
    <property type="project" value="InterPro"/>
</dbReference>
<dbReference type="GO" id="GO:0009704">
    <property type="term" value="P:de-etiolation"/>
    <property type="evidence" value="ECO:0000315"/>
    <property type="project" value="TAIR"/>
</dbReference>
<dbReference type="GO" id="GO:0006357">
    <property type="term" value="P:regulation of transcription by RNA polymerase II"/>
    <property type="evidence" value="ECO:0007669"/>
    <property type="project" value="InterPro"/>
</dbReference>
<dbReference type="GO" id="GO:0051510">
    <property type="term" value="P:regulation of unidimensional cell growth"/>
    <property type="evidence" value="ECO:0000315"/>
    <property type="project" value="TAIR"/>
</dbReference>
<dbReference type="Gene3D" id="6.10.140.200">
    <property type="match status" value="1"/>
</dbReference>
<dbReference type="InterPro" id="IPR037212">
    <property type="entry name" value="Med7/Med21-like"/>
</dbReference>
<dbReference type="InterPro" id="IPR009244">
    <property type="entry name" value="Mediatior_Med7"/>
</dbReference>
<dbReference type="InterPro" id="IPR044888">
    <property type="entry name" value="Mediatior_Med7_sf"/>
</dbReference>
<dbReference type="PANTHER" id="PTHR21428">
    <property type="entry name" value="MEDIATOR OF RNA POLYMERASE II TRANSCRIPTION SUBUNIT 7"/>
    <property type="match status" value="1"/>
</dbReference>
<dbReference type="PANTHER" id="PTHR21428:SF11">
    <property type="entry name" value="MEDIATOR OF RNA POLYMERASE II TRANSCRIPTION SUBUNIT 7"/>
    <property type="match status" value="1"/>
</dbReference>
<dbReference type="Pfam" id="PF05983">
    <property type="entry name" value="Med7"/>
    <property type="match status" value="1"/>
</dbReference>
<dbReference type="SUPFAM" id="SSF140718">
    <property type="entry name" value="Mediator hinge subcomplex-like"/>
    <property type="match status" value="1"/>
</dbReference>
<sequence>MATATYPPPPPYYRLYKDFSENTDSAPEPPPPIEGTYVCFGGNYTTEDVLPSLEEQGVPQLYPKDSNLDYKKELRSLNRELQLHILELADVLVDRPSQYAKRIGEISSIFKNLHHLLNSLRPHQARATLIHIMELQIQQRKQAVEDIKRRREEAQGLLKDAFVTLDGQ</sequence>
<feature type="chain" id="PRO_0000418113" description="Mediator of RNA polymerase II transcription subunit 7b">
    <location>
        <begin position="1"/>
        <end position="168"/>
    </location>
</feature>
<feature type="region of interest" description="Disordered" evidence="2">
    <location>
        <begin position="1"/>
        <end position="33"/>
    </location>
</feature>
<feature type="coiled-coil region" evidence="1">
    <location>
        <begin position="64"/>
        <end position="92"/>
    </location>
</feature>
<feature type="coiled-coil region" evidence="1">
    <location>
        <begin position="132"/>
        <end position="162"/>
    </location>
</feature>
<feature type="compositionally biased region" description="Pro residues" evidence="2">
    <location>
        <begin position="1"/>
        <end position="12"/>
    </location>
</feature>
<proteinExistence type="evidence at protein level"/>
<evidence type="ECO:0000255" key="1"/>
<evidence type="ECO:0000256" key="2">
    <source>
        <dbReference type="SAM" id="MobiDB-lite"/>
    </source>
</evidence>
<evidence type="ECO:0000269" key="3">
    <source>
    </source>
</evidence>
<evidence type="ECO:0000269" key="4">
    <source>
    </source>
</evidence>
<evidence type="ECO:0000269" key="5">
    <source>
    </source>
</evidence>
<evidence type="ECO:0000305" key="6"/>
<gene>
    <name type="primary">MED7B</name>
    <name type="synonym">MED7_2</name>
    <name type="ordered locus">At5g03500</name>
    <name type="ORF">F12E4.270</name>
</gene>